<keyword id="KW-0963">Cytoplasm</keyword>
<keyword id="KW-0418">Kinase</keyword>
<keyword id="KW-0808">Transferase</keyword>
<dbReference type="EC" id="2.7.1.189" evidence="1"/>
<dbReference type="EMBL" id="CP000948">
    <property type="protein sequence ID" value="ACB02721.1"/>
    <property type="molecule type" value="Genomic_DNA"/>
</dbReference>
<dbReference type="RefSeq" id="WP_000113108.1">
    <property type="nucleotide sequence ID" value="NC_010473.1"/>
</dbReference>
<dbReference type="SMR" id="B1XE99"/>
<dbReference type="KEGG" id="ecd:ECDH10B_1642"/>
<dbReference type="HOGENOM" id="CLU_009281_3_4_6"/>
<dbReference type="GO" id="GO:0005737">
    <property type="term" value="C:cytoplasm"/>
    <property type="evidence" value="ECO:0007669"/>
    <property type="project" value="UniProtKB-SubCell"/>
</dbReference>
<dbReference type="GO" id="GO:0071518">
    <property type="term" value="F:autoinducer-2 kinase activity"/>
    <property type="evidence" value="ECO:0007669"/>
    <property type="project" value="UniProtKB-UniRule"/>
</dbReference>
<dbReference type="GO" id="GO:0005975">
    <property type="term" value="P:carbohydrate metabolic process"/>
    <property type="evidence" value="ECO:0007669"/>
    <property type="project" value="InterPro"/>
</dbReference>
<dbReference type="GO" id="GO:0009372">
    <property type="term" value="P:quorum sensing"/>
    <property type="evidence" value="ECO:0007669"/>
    <property type="project" value="InterPro"/>
</dbReference>
<dbReference type="CDD" id="cd07775">
    <property type="entry name" value="ASKHA_NBD_FGGY_AI-2K"/>
    <property type="match status" value="1"/>
</dbReference>
<dbReference type="FunFam" id="3.30.420.40:FF:000155">
    <property type="entry name" value="Autoinducer-2 kinase"/>
    <property type="match status" value="1"/>
</dbReference>
<dbReference type="FunFam" id="3.30.420.40:FF:000160">
    <property type="entry name" value="Autoinducer-2 kinase"/>
    <property type="match status" value="1"/>
</dbReference>
<dbReference type="Gene3D" id="3.30.420.40">
    <property type="match status" value="2"/>
</dbReference>
<dbReference type="HAMAP" id="MF_02053">
    <property type="entry name" value="LsrK"/>
    <property type="match status" value="1"/>
</dbReference>
<dbReference type="InterPro" id="IPR033676">
    <property type="entry name" value="AI-2_kinase"/>
</dbReference>
<dbReference type="InterPro" id="IPR043129">
    <property type="entry name" value="ATPase_NBD"/>
</dbReference>
<dbReference type="InterPro" id="IPR000577">
    <property type="entry name" value="Carb_kinase_FGGY"/>
</dbReference>
<dbReference type="InterPro" id="IPR018485">
    <property type="entry name" value="FGGY_C"/>
</dbReference>
<dbReference type="InterPro" id="IPR050406">
    <property type="entry name" value="FGGY_Carb_Kinase"/>
</dbReference>
<dbReference type="InterPro" id="IPR018484">
    <property type="entry name" value="FGGY_N"/>
</dbReference>
<dbReference type="NCBIfam" id="NF008187">
    <property type="entry name" value="PRK10939.1"/>
    <property type="match status" value="1"/>
</dbReference>
<dbReference type="PANTHER" id="PTHR43095:SF1">
    <property type="entry name" value="AUTOINDUCER-2 KINASE"/>
    <property type="match status" value="1"/>
</dbReference>
<dbReference type="PANTHER" id="PTHR43095">
    <property type="entry name" value="SUGAR KINASE"/>
    <property type="match status" value="1"/>
</dbReference>
<dbReference type="Pfam" id="PF02782">
    <property type="entry name" value="FGGY_C"/>
    <property type="match status" value="1"/>
</dbReference>
<dbReference type="Pfam" id="PF00370">
    <property type="entry name" value="FGGY_N"/>
    <property type="match status" value="1"/>
</dbReference>
<dbReference type="PIRSF" id="PIRSF000538">
    <property type="entry name" value="GlpK"/>
    <property type="match status" value="1"/>
</dbReference>
<dbReference type="SUPFAM" id="SSF53067">
    <property type="entry name" value="Actin-like ATPase domain"/>
    <property type="match status" value="2"/>
</dbReference>
<gene>
    <name evidence="1" type="primary">lsrK</name>
    <name type="ordered locus">ECDH10B_1642</name>
</gene>
<protein>
    <recommendedName>
        <fullName evidence="1">Autoinducer-2 kinase</fullName>
        <shortName evidence="1">AI-2 kinase</shortName>
        <ecNumber evidence="1">2.7.1.189</ecNumber>
    </recommendedName>
</protein>
<comment type="function">
    <text evidence="1">Catalyzes the phosphorylation of autoinducer-2 (AI-2) to phospho-AI-2, which subsequently inactivates the transcriptional regulator LsrR and leads to the transcription of the lsr operon. Phosphorylates the ring-open form of (S)-4,5-dihydroxypentane-2,3-dione (DPD), which is the precursor to all AI-2 signaling molecules, at the C5 position.</text>
</comment>
<comment type="catalytic activity">
    <reaction evidence="1">
        <text>(S)-4,5-dihydroxypentane-2,3-dione + ATP = (2S)-2-hydroxy-3,4-dioxopentyl phosphate + ADP + H(+)</text>
        <dbReference type="Rhea" id="RHEA:15377"/>
        <dbReference type="ChEBI" id="CHEBI:15378"/>
        <dbReference type="ChEBI" id="CHEBI:29484"/>
        <dbReference type="ChEBI" id="CHEBI:30616"/>
        <dbReference type="ChEBI" id="CHEBI:71677"/>
        <dbReference type="ChEBI" id="CHEBI:456216"/>
        <dbReference type="EC" id="2.7.1.189"/>
    </reaction>
</comment>
<comment type="subcellular location">
    <subcellularLocation>
        <location evidence="1">Cytoplasm</location>
    </subcellularLocation>
</comment>
<comment type="similarity">
    <text evidence="1">Belongs to the FGGY kinase family.</text>
</comment>
<accession>B1XE99</accession>
<name>LSRK_ECODH</name>
<sequence length="530" mass="57545">MARLFTLSESKYYLMALDAGTGSIRAVIFDLEGNQIAVGQAEWRHLAVPDVPGSMEFDLNKNWQLACECMRQALHNAGIAPEYIAAVSACSMREGIVLYNNEGAPIWACANVDARAAREVSELKELHNNTFENEVYRATGQTLALSAIPRLLWLAHHRSDIYRQASTITMISDWLAYMLSGELAVDPSNAGTTGLLDLTTRDWKPALLDMAGLRADILSPVKETGTLLGVVSSQAAELCGLKAGTPVVVGGGDVQLGCLGLGVVRPAQTAVLGGTFWQQVVNLAAPVTDPEMNVRVNPHVIPGMVQAESISFFTGLTMRWFRDAFCAEEKLIAERLGIDTYTLLEEMASRVPPGSWGVMPIFSDRMRFKTWYHAAPSFINLSIDPDKCNKATLFRALEENAAIVSACNLQQIADFSNIHPSSLVFAGGGSKGKLWSQILADVSGLPVNIPVVKEATALGCAIAAGVGAGIFSSMAETGERLVRWERTHTPDPEKHELYQDSRDKWQAVYQDQLGLVDHGLTTSLWKAPGL</sequence>
<reference key="1">
    <citation type="journal article" date="2008" name="J. Bacteriol.">
        <title>The complete genome sequence of Escherichia coli DH10B: insights into the biology of a laboratory workhorse.</title>
        <authorList>
            <person name="Durfee T."/>
            <person name="Nelson R."/>
            <person name="Baldwin S."/>
            <person name="Plunkett G. III"/>
            <person name="Burland V."/>
            <person name="Mau B."/>
            <person name="Petrosino J.F."/>
            <person name="Qin X."/>
            <person name="Muzny D.M."/>
            <person name="Ayele M."/>
            <person name="Gibbs R.A."/>
            <person name="Csorgo B."/>
            <person name="Posfai G."/>
            <person name="Weinstock G.M."/>
            <person name="Blattner F.R."/>
        </authorList>
    </citation>
    <scope>NUCLEOTIDE SEQUENCE [LARGE SCALE GENOMIC DNA]</scope>
    <source>
        <strain>K12 / DH10B</strain>
    </source>
</reference>
<proteinExistence type="inferred from homology"/>
<organism>
    <name type="scientific">Escherichia coli (strain K12 / DH10B)</name>
    <dbReference type="NCBI Taxonomy" id="316385"/>
    <lineage>
        <taxon>Bacteria</taxon>
        <taxon>Pseudomonadati</taxon>
        <taxon>Pseudomonadota</taxon>
        <taxon>Gammaproteobacteria</taxon>
        <taxon>Enterobacterales</taxon>
        <taxon>Enterobacteriaceae</taxon>
        <taxon>Escherichia</taxon>
    </lineage>
</organism>
<feature type="chain" id="PRO_0000351588" description="Autoinducer-2 kinase">
    <location>
        <begin position="1"/>
        <end position="530"/>
    </location>
</feature>
<evidence type="ECO:0000255" key="1">
    <source>
        <dbReference type="HAMAP-Rule" id="MF_02053"/>
    </source>
</evidence>